<protein>
    <recommendedName>
        <fullName evidence="1">Bifunctional protein HldE</fullName>
    </recommendedName>
    <domain>
        <recommendedName>
            <fullName evidence="1">D-beta-D-heptose 7-phosphate kinase</fullName>
            <ecNumber evidence="1">2.7.1.167</ecNumber>
        </recommendedName>
        <alternativeName>
            <fullName evidence="1">D-beta-D-heptose 7-phosphotransferase</fullName>
        </alternativeName>
        <alternativeName>
            <fullName evidence="1">D-glycero-beta-D-manno-heptose-7-phosphate kinase</fullName>
        </alternativeName>
    </domain>
    <domain>
        <recommendedName>
            <fullName evidence="1">D-beta-D-heptose 1-phosphate adenylyltransferase</fullName>
            <ecNumber evidence="1">2.7.7.70</ecNumber>
        </recommendedName>
        <alternativeName>
            <fullName evidence="1">D-glycero-beta-D-manno-heptose 1-phosphate adenylyltransferase</fullName>
        </alternativeName>
    </domain>
</protein>
<organism>
    <name type="scientific">Shewanella loihica (strain ATCC BAA-1088 / PV-4)</name>
    <dbReference type="NCBI Taxonomy" id="323850"/>
    <lineage>
        <taxon>Bacteria</taxon>
        <taxon>Pseudomonadati</taxon>
        <taxon>Pseudomonadota</taxon>
        <taxon>Gammaproteobacteria</taxon>
        <taxon>Alteromonadales</taxon>
        <taxon>Shewanellaceae</taxon>
        <taxon>Shewanella</taxon>
    </lineage>
</organism>
<reference key="1">
    <citation type="submission" date="2007-03" db="EMBL/GenBank/DDBJ databases">
        <title>Complete sequence of Shewanella loihica PV-4.</title>
        <authorList>
            <consortium name="US DOE Joint Genome Institute"/>
            <person name="Copeland A."/>
            <person name="Lucas S."/>
            <person name="Lapidus A."/>
            <person name="Barry K."/>
            <person name="Detter J.C."/>
            <person name="Glavina del Rio T."/>
            <person name="Hammon N."/>
            <person name="Israni S."/>
            <person name="Dalin E."/>
            <person name="Tice H."/>
            <person name="Pitluck S."/>
            <person name="Chain P."/>
            <person name="Malfatti S."/>
            <person name="Shin M."/>
            <person name="Vergez L."/>
            <person name="Schmutz J."/>
            <person name="Larimer F."/>
            <person name="Land M."/>
            <person name="Hauser L."/>
            <person name="Kyrpides N."/>
            <person name="Mikhailova N."/>
            <person name="Romine M.F."/>
            <person name="Serres G."/>
            <person name="Fredrickson J."/>
            <person name="Tiedje J."/>
            <person name="Richardson P."/>
        </authorList>
    </citation>
    <scope>NUCLEOTIDE SEQUENCE [LARGE SCALE GENOMIC DNA]</scope>
    <source>
        <strain>ATCC BAA-1088 / PV-4</strain>
    </source>
</reference>
<evidence type="ECO:0000255" key="1">
    <source>
        <dbReference type="HAMAP-Rule" id="MF_01603"/>
    </source>
</evidence>
<accession>A3QAN3</accession>
<dbReference type="EC" id="2.7.1.167" evidence="1"/>
<dbReference type="EC" id="2.7.7.70" evidence="1"/>
<dbReference type="EMBL" id="CP000606">
    <property type="protein sequence ID" value="ABO22531.1"/>
    <property type="molecule type" value="Genomic_DNA"/>
</dbReference>
<dbReference type="RefSeq" id="WP_011864465.1">
    <property type="nucleotide sequence ID" value="NC_009092.1"/>
</dbReference>
<dbReference type="SMR" id="A3QAN3"/>
<dbReference type="STRING" id="323850.Shew_0659"/>
<dbReference type="KEGG" id="slo:Shew_0659"/>
<dbReference type="eggNOG" id="COG0615">
    <property type="taxonomic scope" value="Bacteria"/>
</dbReference>
<dbReference type="eggNOG" id="COG2870">
    <property type="taxonomic scope" value="Bacteria"/>
</dbReference>
<dbReference type="HOGENOM" id="CLU_021150_2_1_6"/>
<dbReference type="OrthoDB" id="9802794at2"/>
<dbReference type="UniPathway" id="UPA00356">
    <property type="reaction ID" value="UER00437"/>
</dbReference>
<dbReference type="UniPathway" id="UPA00356">
    <property type="reaction ID" value="UER00439"/>
</dbReference>
<dbReference type="Proteomes" id="UP000001558">
    <property type="component" value="Chromosome"/>
</dbReference>
<dbReference type="GO" id="GO:0005829">
    <property type="term" value="C:cytosol"/>
    <property type="evidence" value="ECO:0007669"/>
    <property type="project" value="TreeGrafter"/>
</dbReference>
<dbReference type="GO" id="GO:0005524">
    <property type="term" value="F:ATP binding"/>
    <property type="evidence" value="ECO:0007669"/>
    <property type="project" value="UniProtKB-UniRule"/>
</dbReference>
<dbReference type="GO" id="GO:0033785">
    <property type="term" value="F:heptose 7-phosphate kinase activity"/>
    <property type="evidence" value="ECO:0007669"/>
    <property type="project" value="UniProtKB-UniRule"/>
</dbReference>
<dbReference type="GO" id="GO:0033786">
    <property type="term" value="F:heptose-1-phosphate adenylyltransferase activity"/>
    <property type="evidence" value="ECO:0007669"/>
    <property type="project" value="UniProtKB-UniRule"/>
</dbReference>
<dbReference type="GO" id="GO:0016773">
    <property type="term" value="F:phosphotransferase activity, alcohol group as acceptor"/>
    <property type="evidence" value="ECO:0007669"/>
    <property type="project" value="InterPro"/>
</dbReference>
<dbReference type="GO" id="GO:0097171">
    <property type="term" value="P:ADP-L-glycero-beta-D-manno-heptose biosynthetic process"/>
    <property type="evidence" value="ECO:0007669"/>
    <property type="project" value="UniProtKB-UniPathway"/>
</dbReference>
<dbReference type="CDD" id="cd01172">
    <property type="entry name" value="RfaE_like"/>
    <property type="match status" value="1"/>
</dbReference>
<dbReference type="FunFam" id="3.40.1190.20:FF:000002">
    <property type="entry name" value="Bifunctional protein HldE"/>
    <property type="match status" value="1"/>
</dbReference>
<dbReference type="FunFam" id="3.40.50.620:FF:000028">
    <property type="entry name" value="Bifunctional protein HldE"/>
    <property type="match status" value="1"/>
</dbReference>
<dbReference type="Gene3D" id="3.40.1190.20">
    <property type="match status" value="1"/>
</dbReference>
<dbReference type="Gene3D" id="3.40.50.620">
    <property type="entry name" value="HUPs"/>
    <property type="match status" value="1"/>
</dbReference>
<dbReference type="HAMAP" id="MF_01603">
    <property type="entry name" value="HldE"/>
    <property type="match status" value="1"/>
</dbReference>
<dbReference type="InterPro" id="IPR023030">
    <property type="entry name" value="Bifunc_HldE"/>
</dbReference>
<dbReference type="InterPro" id="IPR002173">
    <property type="entry name" value="Carboh/pur_kinase_PfkB_CS"/>
</dbReference>
<dbReference type="InterPro" id="IPR004821">
    <property type="entry name" value="Cyt_trans-like"/>
</dbReference>
<dbReference type="InterPro" id="IPR011611">
    <property type="entry name" value="PfkB_dom"/>
</dbReference>
<dbReference type="InterPro" id="IPR011913">
    <property type="entry name" value="RfaE_dom_I"/>
</dbReference>
<dbReference type="InterPro" id="IPR011914">
    <property type="entry name" value="RfaE_dom_II"/>
</dbReference>
<dbReference type="InterPro" id="IPR029056">
    <property type="entry name" value="Ribokinase-like"/>
</dbReference>
<dbReference type="InterPro" id="IPR014729">
    <property type="entry name" value="Rossmann-like_a/b/a_fold"/>
</dbReference>
<dbReference type="NCBIfam" id="TIGR00125">
    <property type="entry name" value="cyt_tran_rel"/>
    <property type="match status" value="1"/>
</dbReference>
<dbReference type="NCBIfam" id="NF008454">
    <property type="entry name" value="PRK11316.1"/>
    <property type="match status" value="1"/>
</dbReference>
<dbReference type="NCBIfam" id="TIGR02198">
    <property type="entry name" value="rfaE_dom_I"/>
    <property type="match status" value="1"/>
</dbReference>
<dbReference type="NCBIfam" id="TIGR02199">
    <property type="entry name" value="rfaE_dom_II"/>
    <property type="match status" value="1"/>
</dbReference>
<dbReference type="PANTHER" id="PTHR46969">
    <property type="entry name" value="BIFUNCTIONAL PROTEIN HLDE"/>
    <property type="match status" value="1"/>
</dbReference>
<dbReference type="PANTHER" id="PTHR46969:SF1">
    <property type="entry name" value="BIFUNCTIONAL PROTEIN HLDE"/>
    <property type="match status" value="1"/>
</dbReference>
<dbReference type="Pfam" id="PF01467">
    <property type="entry name" value="CTP_transf_like"/>
    <property type="match status" value="1"/>
</dbReference>
<dbReference type="Pfam" id="PF00294">
    <property type="entry name" value="PfkB"/>
    <property type="match status" value="1"/>
</dbReference>
<dbReference type="SUPFAM" id="SSF52374">
    <property type="entry name" value="Nucleotidylyl transferase"/>
    <property type="match status" value="1"/>
</dbReference>
<dbReference type="SUPFAM" id="SSF53613">
    <property type="entry name" value="Ribokinase-like"/>
    <property type="match status" value="1"/>
</dbReference>
<dbReference type="PROSITE" id="PS00583">
    <property type="entry name" value="PFKB_KINASES_1"/>
    <property type="match status" value="1"/>
</dbReference>
<dbReference type="PROSITE" id="PS00584">
    <property type="entry name" value="PFKB_KINASES_2"/>
    <property type="match status" value="1"/>
</dbReference>
<proteinExistence type="inferred from homology"/>
<feature type="chain" id="PRO_0000291689" description="Bifunctional protein HldE">
    <location>
        <begin position="1"/>
        <end position="476"/>
    </location>
</feature>
<feature type="region of interest" description="Ribokinase">
    <location>
        <begin position="1"/>
        <end position="319"/>
    </location>
</feature>
<feature type="region of interest" description="Cytidylyltransferase">
    <location>
        <begin position="345"/>
        <end position="476"/>
    </location>
</feature>
<feature type="active site" evidence="1">
    <location>
        <position position="264"/>
    </location>
</feature>
<feature type="binding site" evidence="1">
    <location>
        <begin position="195"/>
        <end position="198"/>
    </location>
    <ligand>
        <name>ATP</name>
        <dbReference type="ChEBI" id="CHEBI:30616"/>
    </ligand>
</feature>
<comment type="function">
    <text evidence="1">Catalyzes the phosphorylation of D-glycero-D-manno-heptose 7-phosphate at the C-1 position to selectively form D-glycero-beta-D-manno-heptose-1,7-bisphosphate.</text>
</comment>
<comment type="function">
    <text evidence="1">Catalyzes the ADP transfer from ATP to D-glycero-beta-D-manno-heptose 1-phosphate, yielding ADP-D-glycero-beta-D-manno-heptose.</text>
</comment>
<comment type="catalytic activity">
    <reaction evidence="1">
        <text>D-glycero-beta-D-manno-heptose 7-phosphate + ATP = D-glycero-beta-D-manno-heptose 1,7-bisphosphate + ADP + H(+)</text>
        <dbReference type="Rhea" id="RHEA:27473"/>
        <dbReference type="ChEBI" id="CHEBI:15378"/>
        <dbReference type="ChEBI" id="CHEBI:30616"/>
        <dbReference type="ChEBI" id="CHEBI:60204"/>
        <dbReference type="ChEBI" id="CHEBI:60208"/>
        <dbReference type="ChEBI" id="CHEBI:456216"/>
        <dbReference type="EC" id="2.7.1.167"/>
    </reaction>
</comment>
<comment type="catalytic activity">
    <reaction evidence="1">
        <text>D-glycero-beta-D-manno-heptose 1-phosphate + ATP + H(+) = ADP-D-glycero-beta-D-manno-heptose + diphosphate</text>
        <dbReference type="Rhea" id="RHEA:27465"/>
        <dbReference type="ChEBI" id="CHEBI:15378"/>
        <dbReference type="ChEBI" id="CHEBI:30616"/>
        <dbReference type="ChEBI" id="CHEBI:33019"/>
        <dbReference type="ChEBI" id="CHEBI:59967"/>
        <dbReference type="ChEBI" id="CHEBI:61593"/>
        <dbReference type="EC" id="2.7.7.70"/>
    </reaction>
</comment>
<comment type="pathway">
    <text evidence="1">Nucleotide-sugar biosynthesis; ADP-L-glycero-beta-D-manno-heptose biosynthesis; ADP-L-glycero-beta-D-manno-heptose from D-glycero-beta-D-manno-heptose 7-phosphate: step 1/4.</text>
</comment>
<comment type="pathway">
    <text evidence="1">Nucleotide-sugar biosynthesis; ADP-L-glycero-beta-D-manno-heptose biosynthesis; ADP-L-glycero-beta-D-manno-heptose from D-glycero-beta-D-manno-heptose 7-phosphate: step 3/4.</text>
</comment>
<comment type="subunit">
    <text evidence="1">Homodimer.</text>
</comment>
<comment type="similarity">
    <text evidence="1">In the N-terminal section; belongs to the carbohydrate kinase PfkB family.</text>
</comment>
<comment type="similarity">
    <text evidence="1">In the C-terminal section; belongs to the cytidylyltransferase family.</text>
</comment>
<keyword id="KW-0067">ATP-binding</keyword>
<keyword id="KW-0119">Carbohydrate metabolism</keyword>
<keyword id="KW-0418">Kinase</keyword>
<keyword id="KW-0511">Multifunctional enzyme</keyword>
<keyword id="KW-0547">Nucleotide-binding</keyword>
<keyword id="KW-0548">Nucleotidyltransferase</keyword>
<keyword id="KW-1185">Reference proteome</keyword>
<keyword id="KW-0808">Transferase</keyword>
<gene>
    <name evidence="1" type="primary">hldE</name>
    <name type="ordered locus">Shew_0659</name>
</gene>
<sequence length="476" mass="50410">MKISLPAFEKANVLVVGDVMLDRYWSGPTGRISPEAPVPVVRVNQIEDRPGGAANVALNIATLGGQVSLAGIVGEDETAAALTQGIEALGVVPKWHTVAELPTITKLRVMSRNQQLIRLDFEEAYPAEQSLALLASAEKELDKVAVVVLSDYAKGAIDKPEAFIAKAKAKGVKVLVDPKGSDFSRYRGATLLTPNMSEFEQVVGKVADEADLVTKAKELLKEFDFEALLVTRSEKGMTLITADAPELHIPTVAHEVYDVTGAGDTVISALATSLAVGCELPVACALANTAAGIVVGKLGTSTVSRIELIAALNLSHGESGYGVVSEDQLAYALEQAKLKGERVVMTNGCFDILHAGHVSYLQQARALGDRLIVAVNDDDSVKRLKGDGRPVNKLDRRMAVLAGLASVDWVVPFSEDTPQRIISRLLPNKLVKGGDYNVEDIAGGKEVIAAGGSVEVLGFEDGVSTTAIIENIMAKQ</sequence>
<name>HLDE_SHELP</name>